<accession>P64603</accession>
<accession>P45389</accession>
<comment type="function">
    <text evidence="1">Part of the ABC transporter complex MlaFEDB, which is involved in a phospholipid transport pathway that maintains lipid asymmetry in the outer membrane by retrograde trafficking of phospholipids from the outer membrane to the inner membrane. MlaB plays critical roles in both the assembly and activity of the complex. May act by modulating MlaF structure and stability.</text>
</comment>
<comment type="subunit">
    <text evidence="1">The complex is composed of two ATP-binding proteins (MlaF), two transmembrane proteins (MlaE), two cytoplasmic solute-binding proteins (MlaB) and six periplasmic solute-binding proteins (MlaD).</text>
</comment>
<comment type="subcellular location">
    <subcellularLocation>
        <location evidence="1">Cytoplasm</location>
    </subcellularLocation>
</comment>
<comment type="sequence caution" evidence="3">
    <conflict type="erroneous initiation">
        <sequence resource="EMBL-CDS" id="AAN44697"/>
    </conflict>
</comment>
<comment type="sequence caution" evidence="3">
    <conflict type="erroneous initiation">
        <sequence resource="EMBL-CDS" id="AAP18511"/>
    </conflict>
</comment>
<sequence>MSESLSWMQTGDTLALSGELDQDVLLPLWEMREEAVKGITCIDLSRVSRVDTGGLALLLHLIDLAKKQGNNVTLQGVNDKVYTLAKLYNLPADVLPR</sequence>
<gene>
    <name evidence="1" type="primary">mlaB</name>
    <name type="ordered locus">SF3231</name>
    <name type="ordered locus">S3449</name>
</gene>
<feature type="chain" id="PRO_0000169463" description="Intermembrane phospholipid transport system binding protein MlaB">
    <location>
        <begin position="1"/>
        <end position="97"/>
    </location>
</feature>
<feature type="domain" description="STAS" evidence="2">
    <location>
        <begin position="1"/>
        <end position="97"/>
    </location>
</feature>
<protein>
    <recommendedName>
        <fullName evidence="1">Intermembrane phospholipid transport system binding protein MlaB</fullName>
    </recommendedName>
</protein>
<evidence type="ECO:0000250" key="1">
    <source>
        <dbReference type="UniProtKB" id="P64602"/>
    </source>
</evidence>
<evidence type="ECO:0000255" key="2">
    <source>
        <dbReference type="PROSITE-ProRule" id="PRU00198"/>
    </source>
</evidence>
<evidence type="ECO:0000305" key="3"/>
<dbReference type="EMBL" id="AE005674">
    <property type="protein sequence ID" value="AAN44697.1"/>
    <property type="status" value="ALT_INIT"/>
    <property type="molecule type" value="Genomic_DNA"/>
</dbReference>
<dbReference type="EMBL" id="AE014073">
    <property type="protein sequence ID" value="AAP18511.1"/>
    <property type="status" value="ALT_INIT"/>
    <property type="molecule type" value="Genomic_DNA"/>
</dbReference>
<dbReference type="RefSeq" id="WP_000004488.1">
    <property type="nucleotide sequence ID" value="NZ_WPGW01000004.1"/>
</dbReference>
<dbReference type="SMR" id="P64603"/>
<dbReference type="STRING" id="198214.SF3231"/>
<dbReference type="PaxDb" id="198214-SF3231"/>
<dbReference type="GeneID" id="93778790"/>
<dbReference type="KEGG" id="sfx:S3449"/>
<dbReference type="PATRIC" id="fig|623.156.peg.1709"/>
<dbReference type="HOGENOM" id="CLU_115403_13_4_6"/>
<dbReference type="Proteomes" id="UP000001006">
    <property type="component" value="Chromosome"/>
</dbReference>
<dbReference type="Proteomes" id="UP000002673">
    <property type="component" value="Chromosome"/>
</dbReference>
<dbReference type="GO" id="GO:0005737">
    <property type="term" value="C:cytoplasm"/>
    <property type="evidence" value="ECO:0007669"/>
    <property type="project" value="UniProtKB-SubCell"/>
</dbReference>
<dbReference type="FunFam" id="3.30.750.24:FF:000004">
    <property type="entry name" value="Phospholipid ABC transporter-binding protein"/>
    <property type="match status" value="1"/>
</dbReference>
<dbReference type="Gene3D" id="3.30.750.24">
    <property type="entry name" value="STAS domain"/>
    <property type="match status" value="1"/>
</dbReference>
<dbReference type="InterPro" id="IPR049743">
    <property type="entry name" value="MlaB"/>
</dbReference>
<dbReference type="InterPro" id="IPR052746">
    <property type="entry name" value="MlaB_ABC_Transporter"/>
</dbReference>
<dbReference type="InterPro" id="IPR002645">
    <property type="entry name" value="STAS_dom"/>
</dbReference>
<dbReference type="InterPro" id="IPR036513">
    <property type="entry name" value="STAS_dom_sf"/>
</dbReference>
<dbReference type="NCBIfam" id="NF033618">
    <property type="entry name" value="mlaB_1"/>
    <property type="match status" value="1"/>
</dbReference>
<dbReference type="PANTHER" id="PTHR35849">
    <property type="entry name" value="BLR2341 PROTEIN"/>
    <property type="match status" value="1"/>
</dbReference>
<dbReference type="PANTHER" id="PTHR35849:SF1">
    <property type="entry name" value="INTERMEMBRANE PHOSPHOLIPID TRANSPORT SYSTEM BINDING PROTEIN MLAB"/>
    <property type="match status" value="1"/>
</dbReference>
<dbReference type="Pfam" id="PF13466">
    <property type="entry name" value="STAS_2"/>
    <property type="match status" value="1"/>
</dbReference>
<dbReference type="SUPFAM" id="SSF52091">
    <property type="entry name" value="SpoIIaa-like"/>
    <property type="match status" value="1"/>
</dbReference>
<dbReference type="PROSITE" id="PS50801">
    <property type="entry name" value="STAS"/>
    <property type="match status" value="1"/>
</dbReference>
<keyword id="KW-0963">Cytoplasm</keyword>
<keyword id="KW-1185">Reference proteome</keyword>
<keyword id="KW-0813">Transport</keyword>
<name>MLAB_SHIFL</name>
<proteinExistence type="inferred from homology"/>
<reference key="1">
    <citation type="journal article" date="2002" name="Nucleic Acids Res.">
        <title>Genome sequence of Shigella flexneri 2a: insights into pathogenicity through comparison with genomes of Escherichia coli K12 and O157.</title>
        <authorList>
            <person name="Jin Q."/>
            <person name="Yuan Z."/>
            <person name="Xu J."/>
            <person name="Wang Y."/>
            <person name="Shen Y."/>
            <person name="Lu W."/>
            <person name="Wang J."/>
            <person name="Liu H."/>
            <person name="Yang J."/>
            <person name="Yang F."/>
            <person name="Zhang X."/>
            <person name="Zhang J."/>
            <person name="Yang G."/>
            <person name="Wu H."/>
            <person name="Qu D."/>
            <person name="Dong J."/>
            <person name="Sun L."/>
            <person name="Xue Y."/>
            <person name="Zhao A."/>
            <person name="Gao Y."/>
            <person name="Zhu J."/>
            <person name="Kan B."/>
            <person name="Ding K."/>
            <person name="Chen S."/>
            <person name="Cheng H."/>
            <person name="Yao Z."/>
            <person name="He B."/>
            <person name="Chen R."/>
            <person name="Ma D."/>
            <person name="Qiang B."/>
            <person name="Wen Y."/>
            <person name="Hou Y."/>
            <person name="Yu J."/>
        </authorList>
    </citation>
    <scope>NUCLEOTIDE SEQUENCE [LARGE SCALE GENOMIC DNA]</scope>
    <source>
        <strain>301 / Serotype 2a</strain>
    </source>
</reference>
<reference key="2">
    <citation type="journal article" date="2003" name="Infect. Immun.">
        <title>Complete genome sequence and comparative genomics of Shigella flexneri serotype 2a strain 2457T.</title>
        <authorList>
            <person name="Wei J."/>
            <person name="Goldberg M.B."/>
            <person name="Burland V."/>
            <person name="Venkatesan M.M."/>
            <person name="Deng W."/>
            <person name="Fournier G."/>
            <person name="Mayhew G.F."/>
            <person name="Plunkett G. III"/>
            <person name="Rose D.J."/>
            <person name="Darling A."/>
            <person name="Mau B."/>
            <person name="Perna N.T."/>
            <person name="Payne S.M."/>
            <person name="Runyen-Janecky L.J."/>
            <person name="Zhou S."/>
            <person name="Schwartz D.C."/>
            <person name="Blattner F.R."/>
        </authorList>
    </citation>
    <scope>NUCLEOTIDE SEQUENCE [LARGE SCALE GENOMIC DNA]</scope>
    <source>
        <strain>ATCC 700930 / 2457T / Serotype 2a</strain>
    </source>
</reference>
<organism>
    <name type="scientific">Shigella flexneri</name>
    <dbReference type="NCBI Taxonomy" id="623"/>
    <lineage>
        <taxon>Bacteria</taxon>
        <taxon>Pseudomonadati</taxon>
        <taxon>Pseudomonadota</taxon>
        <taxon>Gammaproteobacteria</taxon>
        <taxon>Enterobacterales</taxon>
        <taxon>Enterobacteriaceae</taxon>
        <taxon>Shigella</taxon>
    </lineage>
</organism>